<proteinExistence type="evidence at protein level"/>
<sequence>MGLRSCTHFATLVIPLWALAFCFLVVVPVPAQTNLQTSKGDRRLQDLESNMGAESDQPNANLVRPSLSRFGDKRNQKIITFGRRVPRPMIPIELDLLMDNDDENTKAKRFDDYGHMRFGKRGGDDQFDDYGHMRFGR</sequence>
<gene>
    <name evidence="6" type="primary">Dsk</name>
    <name type="ORF">GE25375</name>
</gene>
<gene>
    <name type="ORF">GE14608</name>
</gene>
<organism>
    <name type="scientific">Drosophila yakuba</name>
    <name type="common">Fruit fly</name>
    <dbReference type="NCBI Taxonomy" id="7245"/>
    <lineage>
        <taxon>Eukaryota</taxon>
        <taxon>Metazoa</taxon>
        <taxon>Ecdysozoa</taxon>
        <taxon>Arthropoda</taxon>
        <taxon>Hexapoda</taxon>
        <taxon>Insecta</taxon>
        <taxon>Pterygota</taxon>
        <taxon>Neoptera</taxon>
        <taxon>Endopterygota</taxon>
        <taxon>Diptera</taxon>
        <taxon>Brachycera</taxon>
        <taxon>Muscomorpha</taxon>
        <taxon>Ephydroidea</taxon>
        <taxon>Drosophilidae</taxon>
        <taxon>Drosophila</taxon>
        <taxon>Sophophora</taxon>
    </lineage>
</organism>
<accession>B2ZBA1</accession>
<name>DSK_DROYA</name>
<reference evidence="6" key="1">
    <citation type="submission" date="2008-04" db="EMBL/GenBank/DDBJ databases">
        <title>A molecular phylogeny for the Drosophila melanogaster subgroup.</title>
        <authorList>
            <person name="Ke F."/>
        </authorList>
    </citation>
    <scope>NUCLEOTIDE SEQUENCE [GENOMIC DNA] (DSK)</scope>
</reference>
<reference key="2">
    <citation type="journal article" date="2007" name="Nature">
        <title>Evolution of genes and genomes on the Drosophila phylogeny.</title>
        <authorList>
            <consortium name="Drosophila 12 genomes consortium"/>
        </authorList>
    </citation>
    <scope>NUCLEOTIDE SEQUENCE [LARGE SCALE GENOMIC DNA] (DSK AND GE25375)</scope>
    <source>
        <strain>Tai18E2 / Tucson 14021-0261.01</strain>
    </source>
</reference>
<reference evidence="5" key="3">
    <citation type="journal article" date="2007" name="J. Insect Physiol.">
        <title>The drosulfakinin 0 (DSK 0) peptide encoded in the conserved Dsk gene affects adult Drosophila melanogaster crop contractions.</title>
        <authorList>
            <person name="Palmer G.C."/>
            <person name="Tran T."/>
            <person name="Duttlinger A."/>
            <person name="Nichols R."/>
        </authorList>
    </citation>
    <scope>IDENTIFICATION</scope>
    <scope>AMIDATION AT PHE-81 AND PHE-118</scope>
    <scope>SULFATION AT TYR-113</scope>
</reference>
<feature type="signal peptide" evidence="2">
    <location>
        <begin position="1"/>
        <end position="31"/>
    </location>
</feature>
<feature type="propeptide" id="PRO_0000351190" evidence="3">
    <location>
        <begin position="32"/>
        <end position="74"/>
    </location>
</feature>
<feature type="peptide" id="PRO_0000351191" description="Drosulfakinin-0" evidence="2 4">
    <location>
        <begin position="75"/>
        <end position="81"/>
    </location>
</feature>
<feature type="propeptide" id="PRO_0000351192" evidence="3">
    <location>
        <begin position="85"/>
        <end position="107"/>
    </location>
</feature>
<feature type="peptide" id="PRO_0000351193" description="Drosulfakinin-1" evidence="2 4">
    <location>
        <begin position="110"/>
        <end position="118"/>
    </location>
</feature>
<feature type="peptide" id="PRO_0000351194" description="Drosulfakinin-2" evidence="1">
    <location>
        <begin position="122"/>
        <end position="135"/>
    </location>
</feature>
<feature type="modified residue" description="Phenylalanine amide" evidence="2 4">
    <location>
        <position position="81"/>
    </location>
</feature>
<feature type="modified residue" description="Sulfotyrosine" evidence="2 4">
    <location>
        <position position="113"/>
    </location>
</feature>
<feature type="modified residue" description="Phenylalanine amide" evidence="2 4">
    <location>
        <position position="118"/>
    </location>
</feature>
<feature type="modified residue" description="Sulfotyrosine" evidence="1">
    <location>
        <position position="130"/>
    </location>
</feature>
<feature type="modified residue" description="Phenylalanine amide" evidence="1">
    <location>
        <position position="135"/>
    </location>
</feature>
<dbReference type="EMBL" id="EU635466">
    <property type="protein sequence ID" value="ACC99375.1"/>
    <property type="molecule type" value="Genomic_DNA"/>
</dbReference>
<dbReference type="EMBL" id="CH898474">
    <property type="protein sequence ID" value="EDX00615.1"/>
    <property type="molecule type" value="Genomic_DNA"/>
</dbReference>
<dbReference type="EMBL" id="CM000160">
    <property type="protein sequence ID" value="EDW95618.1"/>
    <property type="molecule type" value="Genomic_DNA"/>
</dbReference>
<dbReference type="RefSeq" id="XP_002087296.1">
    <property type="nucleotide sequence ID" value="XM_002087260.2"/>
</dbReference>
<dbReference type="SMR" id="B2ZBA1"/>
<dbReference type="EnsemblMetazoa" id="FBtr0261126">
    <property type="protein sequence ID" value="FBpp0259618"/>
    <property type="gene ID" value="FBgn0232204"/>
</dbReference>
<dbReference type="EnsemblMetazoa" id="FBtr0271893">
    <property type="protein sequence ID" value="FBpp0270385"/>
    <property type="gene ID" value="FBgn0242452"/>
</dbReference>
<dbReference type="EnsemblMetazoa" id="XM_002095870.4">
    <property type="protein sequence ID" value="XP_002095906.1"/>
    <property type="gene ID" value="LOC6535250"/>
</dbReference>
<dbReference type="GeneID" id="6535250"/>
<dbReference type="KEGG" id="dya:Dyak_GE14608"/>
<dbReference type="KEGG" id="dya:Dyak_GE25375"/>
<dbReference type="eggNOG" id="ENOG502SESC">
    <property type="taxonomic scope" value="Eukaryota"/>
</dbReference>
<dbReference type="HOGENOM" id="CLU_1847224_0_0_1"/>
<dbReference type="OrthoDB" id="6360815at2759"/>
<dbReference type="PhylomeDB" id="B2ZBA1"/>
<dbReference type="Proteomes" id="UP000002282">
    <property type="component" value="Chromosome 3R"/>
</dbReference>
<dbReference type="Proteomes" id="UP000002282">
    <property type="component" value="Unassembled WGS sequence"/>
</dbReference>
<dbReference type="GO" id="GO:0005576">
    <property type="term" value="C:extracellular region"/>
    <property type="evidence" value="ECO:0007669"/>
    <property type="project" value="UniProtKB-SubCell"/>
</dbReference>
<dbReference type="GO" id="GO:0005184">
    <property type="term" value="F:neuropeptide hormone activity"/>
    <property type="evidence" value="ECO:0007669"/>
    <property type="project" value="EnsemblMetazoa"/>
</dbReference>
<dbReference type="GO" id="GO:0071855">
    <property type="term" value="F:neuropeptide receptor binding"/>
    <property type="evidence" value="ECO:0007669"/>
    <property type="project" value="EnsemblMetazoa"/>
</dbReference>
<dbReference type="GO" id="GO:0008343">
    <property type="term" value="P:adult feeding behavior"/>
    <property type="evidence" value="ECO:0007669"/>
    <property type="project" value="EnsemblMetazoa"/>
</dbReference>
<dbReference type="GO" id="GO:0008344">
    <property type="term" value="P:adult locomotory behavior"/>
    <property type="evidence" value="ECO:0007669"/>
    <property type="project" value="EnsemblMetazoa"/>
</dbReference>
<dbReference type="GO" id="GO:0002121">
    <property type="term" value="P:inter-male aggressive behavior"/>
    <property type="evidence" value="ECO:0007669"/>
    <property type="project" value="EnsemblMetazoa"/>
</dbReference>
<dbReference type="GO" id="GO:0008345">
    <property type="term" value="P:larval locomotory behavior"/>
    <property type="evidence" value="ECO:0007669"/>
    <property type="project" value="EnsemblMetazoa"/>
</dbReference>
<dbReference type="GO" id="GO:0033555">
    <property type="term" value="P:multicellular organismal response to stress"/>
    <property type="evidence" value="ECO:0007669"/>
    <property type="project" value="EnsemblMetazoa"/>
</dbReference>
<dbReference type="GO" id="GO:0007528">
    <property type="term" value="P:neuromuscular junction development"/>
    <property type="evidence" value="ECO:0007669"/>
    <property type="project" value="EnsemblMetazoa"/>
</dbReference>
<dbReference type="GO" id="GO:0007218">
    <property type="term" value="P:neuropeptide signaling pathway"/>
    <property type="evidence" value="ECO:0007669"/>
    <property type="project" value="UniProtKB-KW"/>
</dbReference>
<dbReference type="GO" id="GO:0007204">
    <property type="term" value="P:positive regulation of cytosolic calcium ion concentration"/>
    <property type="evidence" value="ECO:0007669"/>
    <property type="project" value="EnsemblMetazoa"/>
</dbReference>
<dbReference type="GO" id="GO:0006940">
    <property type="term" value="P:regulation of smooth muscle contraction"/>
    <property type="evidence" value="ECO:0007669"/>
    <property type="project" value="EnsemblMetazoa"/>
</dbReference>
<dbReference type="GO" id="GO:0006939">
    <property type="term" value="P:smooth muscle contraction"/>
    <property type="evidence" value="ECO:0000250"/>
    <property type="project" value="UniProtKB"/>
</dbReference>
<dbReference type="InterPro" id="IPR013152">
    <property type="entry name" value="Gastrin/cholecystokinin_CS"/>
</dbReference>
<dbReference type="InterPro" id="IPR013259">
    <property type="entry name" value="Sulfakinin"/>
</dbReference>
<dbReference type="Pfam" id="PF08257">
    <property type="entry name" value="Sulfakinin"/>
    <property type="match status" value="2"/>
</dbReference>
<dbReference type="PROSITE" id="PS00259">
    <property type="entry name" value="GASTRIN"/>
    <property type="match status" value="2"/>
</dbReference>
<evidence type="ECO:0000250" key="1">
    <source>
        <dbReference type="UniProtKB" id="P09040"/>
    </source>
</evidence>
<evidence type="ECO:0000255" key="2"/>
<evidence type="ECO:0000269" key="3">
    <source>
    </source>
</evidence>
<evidence type="ECO:0000303" key="4">
    <source>
    </source>
</evidence>
<evidence type="ECO:0000305" key="5"/>
<evidence type="ECO:0000312" key="6">
    <source>
        <dbReference type="EMBL" id="ACC99375.1"/>
    </source>
</evidence>
<keyword id="KW-0027">Amidation</keyword>
<keyword id="KW-0165">Cleavage on pair of basic residues</keyword>
<keyword id="KW-0372">Hormone</keyword>
<keyword id="KW-0527">Neuropeptide</keyword>
<keyword id="KW-0964">Secreted</keyword>
<keyword id="KW-0732">Signal</keyword>
<keyword id="KW-0765">Sulfation</keyword>
<protein>
    <recommendedName>
        <fullName evidence="4">Drosulfakinins</fullName>
    </recommendedName>
    <component>
        <recommendedName>
            <fullName evidence="4">Drosulfakinin-0</fullName>
            <shortName evidence="4">DSK-0</shortName>
        </recommendedName>
    </component>
    <component>
        <recommendedName>
            <fullName evidence="4">Drosulfakinin-1</fullName>
        </recommendedName>
        <alternativeName>
            <fullName evidence="4">Drosulfakinin I</fullName>
            <shortName evidence="4">DSK-I</shortName>
        </alternativeName>
    </component>
    <component>
        <recommendedName>
            <fullName evidence="4">Drosulfakinin-2</fullName>
        </recommendedName>
        <alternativeName>
            <fullName evidence="4">Drosulfakinin II</fullName>
            <shortName evidence="4">DSK-II</shortName>
        </alternativeName>
    </component>
</protein>
<comment type="function">
    <text evidence="1">Drosulfakinin-0 (DSK 0) plays diverse biological roles including regulating gut muscle contraction in adults but not in larvae.</text>
</comment>
<comment type="subcellular location">
    <subcellularLocation>
        <location evidence="1">Secreted</location>
    </subcellularLocation>
</comment>
<comment type="similarity">
    <text evidence="2">Belongs to the gastrin/cholecystokinin family.</text>
</comment>